<proteinExistence type="evidence at protein level"/>
<evidence type="ECO:0000269" key="1">
    <source>
    </source>
</evidence>
<evidence type="ECO:0000269" key="2">
    <source>
    </source>
</evidence>
<evidence type="ECO:0000269" key="3">
    <source>
    </source>
</evidence>
<evidence type="ECO:0000305" key="4"/>
<evidence type="ECO:0000305" key="5">
    <source>
    </source>
</evidence>
<keyword id="KW-0997">Cell inner membrane</keyword>
<keyword id="KW-1003">Cell membrane</keyword>
<keyword id="KW-0406">Ion transport</keyword>
<keyword id="KW-0472">Membrane</keyword>
<keyword id="KW-0533">Nickel</keyword>
<keyword id="KW-0921">Nickel transport</keyword>
<keyword id="KW-0614">Plasmid</keyword>
<keyword id="KW-1185">Reference proteome</keyword>
<keyword id="KW-0812">Transmembrane</keyword>
<keyword id="KW-1133">Transmembrane helix</keyword>
<keyword id="KW-0813">Transport</keyword>
<reference key="1">
    <citation type="journal article" date="1991" name="J. Biol. Chem.">
        <title>Cloning, nucleotide sequence, and heterologous expression of a high-affinity nickel transport gene from Alcaligenes eutrophus.</title>
        <authorList>
            <person name="Eitinger T."/>
            <person name="Friedrich B."/>
        </authorList>
    </citation>
    <scope>NUCLEOTIDE SEQUENCE [GENOMIC DNA]</scope>
</reference>
<reference key="2">
    <citation type="journal article" date="1995" name="J. Bacteriol.">
        <title>The Alcaligenes eutrophus protein HoxN mediates nickel transport in Escherichia coli.</title>
        <authorList>
            <person name="Wolfram L."/>
            <person name="Friedrich B."/>
            <person name="Eitinger T."/>
        </authorList>
    </citation>
    <scope>SEQUENCE REVISION TO C-TERMINUS</scope>
    <scope>FUNCTION</scope>
    <scope>SUBCELLULAR LOCATION</scope>
</reference>
<reference key="3">
    <citation type="submission" date="2000-06" db="EMBL/GenBank/DDBJ databases">
        <title>Ralstonia eutropha IS5-like insertion element IS881 containing a group II intron.</title>
        <authorList>
            <person name="Eitinger T."/>
            <person name="Degen O."/>
        </authorList>
    </citation>
    <scope>SEQUENCE REVISION TO 121</scope>
</reference>
<reference key="4">
    <citation type="journal article" date="2003" name="J. Mol. Biol.">
        <title>Complete nucleotide sequence of pHG1: a Ralstonia eutropha H16 megaplasmid encoding key enzymes of H(2)-based lithoautotrophy and anaerobiosis.</title>
        <authorList>
            <person name="Schwartz E."/>
            <person name="Henne A."/>
            <person name="Cramm R."/>
            <person name="Eitinger T."/>
            <person name="Friedrich B."/>
            <person name="Gottschalk G."/>
        </authorList>
    </citation>
    <scope>NUCLEOTIDE SEQUENCE [LARGE SCALE GENOMIC DNA]</scope>
    <source>
        <strain>ATCC 17699 / DSM 428 / KCTC 22496 / NCIMB 10442 / H16 / Stanier 337</strain>
    </source>
</reference>
<reference key="5">
    <citation type="journal article" date="1994" name="Mol. Microbiol.">
        <title>A topological model for the high-affinity nickel transporter of Alcaligenes eutrophus.</title>
        <authorList>
            <person name="Eitinger T."/>
            <person name="Friedrich B."/>
        </authorList>
    </citation>
    <scope>SUBCELLULAR LOCATION</scope>
    <scope>TOPOLOGY</scope>
</reference>
<reference key="6">
    <citation type="journal article" date="1999" name="Arch. Microbiol.">
        <title>Selective transport of divalent cations by transition metal permeases: the Alcaligenes eutrophus HoxN and the Rhodococcus rhodochrous NhlF.</title>
        <authorList>
            <person name="Degen O."/>
            <person name="Kobayashi M."/>
            <person name="Shimizu S."/>
            <person name="Eitinger T."/>
        </authorList>
    </citation>
    <scope>FUNCTION</scope>
</reference>
<comment type="function">
    <text evidence="1 2">High-affinity nickel transporter responsible for nickel uptake. Necessary for high levels of activity of hydrogenase and urease. Does not transport cobalt.</text>
</comment>
<comment type="subcellular location">
    <subcellularLocation>
        <location evidence="2 3">Cell inner membrane</location>
        <topology evidence="2 3">Multi-pass membrane protein</topology>
    </subcellularLocation>
</comment>
<comment type="similarity">
    <text evidence="4">Belongs to the NiCoT transporter (TC 2.A.52) family.</text>
</comment>
<protein>
    <recommendedName>
        <fullName>High-affinity nickel transport protein</fullName>
    </recommendedName>
</protein>
<feature type="chain" id="PRO_0000194004" description="High-affinity nickel transport protein">
    <location>
        <begin position="1"/>
        <end position="351"/>
    </location>
</feature>
<feature type="topological domain" description="Cytoplasmic" evidence="5">
    <location>
        <begin position="1"/>
        <end position="19"/>
    </location>
</feature>
<feature type="transmembrane region" description="Helical" evidence="4">
    <location>
        <begin position="20"/>
        <end position="40"/>
    </location>
</feature>
<feature type="topological domain" description="Periplasmic" evidence="5">
    <location>
        <begin position="41"/>
        <end position="51"/>
    </location>
</feature>
<feature type="transmembrane region" description="Helical" evidence="4">
    <location>
        <begin position="52"/>
        <end position="72"/>
    </location>
</feature>
<feature type="topological domain" description="Cytoplasmic" evidence="5">
    <location>
        <begin position="73"/>
        <end position="94"/>
    </location>
</feature>
<feature type="transmembrane region" description="Helical" evidence="4">
    <location>
        <begin position="95"/>
        <end position="115"/>
    </location>
</feature>
<feature type="topological domain" description="Periplasmic" evidence="5">
    <location>
        <begin position="116"/>
        <end position="128"/>
    </location>
</feature>
<feature type="transmembrane region" description="Helical" evidence="4">
    <location>
        <begin position="129"/>
        <end position="149"/>
    </location>
</feature>
<feature type="topological domain" description="Cytoplasmic" evidence="5">
    <location>
        <begin position="150"/>
        <end position="199"/>
    </location>
</feature>
<feature type="transmembrane region" description="Helical" evidence="4">
    <location>
        <begin position="200"/>
        <end position="220"/>
    </location>
</feature>
<feature type="topological domain" description="Periplasmic" evidence="5">
    <location>
        <begin position="221"/>
        <end position="243"/>
    </location>
</feature>
<feature type="transmembrane region" description="Helical" evidence="4">
    <location>
        <begin position="244"/>
        <end position="264"/>
    </location>
</feature>
<feature type="topological domain" description="Cytoplasmic" evidence="5">
    <location>
        <begin position="265"/>
        <end position="269"/>
    </location>
</feature>
<feature type="transmembrane region" description="Helical" evidence="4">
    <location>
        <begin position="270"/>
        <end position="290"/>
    </location>
</feature>
<feature type="topological domain" description="Periplasmic" evidence="5">
    <location>
        <begin position="291"/>
        <end position="316"/>
    </location>
</feature>
<feature type="transmembrane region" description="Helical" evidence="4">
    <location>
        <begin position="317"/>
        <end position="337"/>
    </location>
</feature>
<feature type="topological domain" description="Cytoplasmic" evidence="5">
    <location>
        <begin position="338"/>
        <end position="351"/>
    </location>
</feature>
<gene>
    <name type="primary">hoxN</name>
    <name type="ordered locus">PHG023</name>
</gene>
<sequence length="351" mass="38771">MFQLLAGVRMNSTGRPRAKIILLYALLIAFNIGAWLCALAAFRDHPVLLGTALLAYGLGLRHAVDADHLAAIDNVTRKLMQDGRRPITAGLWFSLGHSSVVVLASVLIAVMATTLQERLDAFHEVGSVIGTLASALFLFAIAAINLVILRSAYRAFRRVRRGGIYVEEDFDLLFGNRGFLARIFRPLFRFITRSWHMYPLGMLFALGFDTATEVALLGISTMEASRGVPIWSILVFPALFTAGMALIDTIDSILMCGAYAWAYAKPVRKLYYNMTITFVSAIVALIVGGIETLGLLADKFMLKGVFWNAVGALNENFCQLGFVIIGIFTVCWVVSIVVYRLRRYDDSEVRA</sequence>
<accession>P23516</accession>
<name>HOXN_CUPNH</name>
<geneLocation type="plasmid">
    <name>megaplasmid pHG1</name>
</geneLocation>
<organism>
    <name type="scientific">Cupriavidus necator (strain ATCC 17699 / DSM 428 / KCTC 22496 / NCIMB 10442 / H16 / Stanier 337)</name>
    <name type="common">Ralstonia eutropha</name>
    <dbReference type="NCBI Taxonomy" id="381666"/>
    <lineage>
        <taxon>Bacteria</taxon>
        <taxon>Pseudomonadati</taxon>
        <taxon>Pseudomonadota</taxon>
        <taxon>Betaproteobacteria</taxon>
        <taxon>Burkholderiales</taxon>
        <taxon>Burkholderiaceae</taxon>
        <taxon>Cupriavidus</taxon>
    </lineage>
</organism>
<dbReference type="EMBL" id="AF261712">
    <property type="protein sequence ID" value="AAA69017.2"/>
    <property type="molecule type" value="Genomic_DNA"/>
</dbReference>
<dbReference type="EMBL" id="AY305378">
    <property type="protein sequence ID" value="AAP85779.1"/>
    <property type="molecule type" value="Genomic_DNA"/>
</dbReference>
<dbReference type="PIR" id="A39512">
    <property type="entry name" value="A39512"/>
</dbReference>
<dbReference type="RefSeq" id="WP_011153948.1">
    <property type="nucleotide sequence ID" value="NC_005241.1"/>
</dbReference>
<dbReference type="TCDB" id="2.A.52.1.1">
    <property type="family name" value="the ni(2+)-co(2+) transporter (nicot) family"/>
</dbReference>
<dbReference type="KEGG" id="reh:PHG023"/>
<dbReference type="PATRIC" id="fig|381666.6.peg.18"/>
<dbReference type="eggNOG" id="COG3376">
    <property type="taxonomic scope" value="Bacteria"/>
</dbReference>
<dbReference type="HOGENOM" id="CLU_036094_2_0_4"/>
<dbReference type="OrthoDB" id="9776706at2"/>
<dbReference type="Proteomes" id="UP000008210">
    <property type="component" value="Plasmid megaplasmid pHG1"/>
</dbReference>
<dbReference type="GO" id="GO:0005886">
    <property type="term" value="C:plasma membrane"/>
    <property type="evidence" value="ECO:0007669"/>
    <property type="project" value="UniProtKB-SubCell"/>
</dbReference>
<dbReference type="GO" id="GO:0015099">
    <property type="term" value="F:nickel cation transmembrane transporter activity"/>
    <property type="evidence" value="ECO:0007669"/>
    <property type="project" value="InterPro"/>
</dbReference>
<dbReference type="InterPro" id="IPR004688">
    <property type="entry name" value="Ni/Co_transpt"/>
</dbReference>
<dbReference type="InterPro" id="IPR011541">
    <property type="entry name" value="Ni/Co_transpt_high_affinity"/>
</dbReference>
<dbReference type="NCBIfam" id="TIGR00802">
    <property type="entry name" value="nico"/>
    <property type="match status" value="1"/>
</dbReference>
<dbReference type="PANTHER" id="PTHR31611">
    <property type="entry name" value="HIGH-AFFINITY NICKEL TRANSPORT PROTEIN NIC1"/>
    <property type="match status" value="1"/>
</dbReference>
<dbReference type="PANTHER" id="PTHR31611:SF0">
    <property type="entry name" value="HIGH-AFFINITY NICKEL TRANSPORT PROTEIN NIC1"/>
    <property type="match status" value="1"/>
</dbReference>
<dbReference type="Pfam" id="PF03824">
    <property type="entry name" value="NicO"/>
    <property type="match status" value="1"/>
</dbReference>